<name>RDH10_RAT</name>
<protein>
    <recommendedName>
        <fullName>Retinol dehydrogenase 10</fullName>
        <ecNumber>1.1.1.300</ecNumber>
    </recommendedName>
</protein>
<feature type="chain" id="PRO_0000307684" description="Retinol dehydrogenase 10">
    <location>
        <begin position="1"/>
        <end position="341"/>
    </location>
</feature>
<feature type="transmembrane region" description="Helical; Signal-anchor" evidence="2">
    <location>
        <begin position="3"/>
        <end position="23"/>
    </location>
</feature>
<feature type="active site" description="Proton acceptor" evidence="3">
    <location>
        <position position="210"/>
    </location>
</feature>
<feature type="binding site" evidence="1">
    <location>
        <begin position="40"/>
        <end position="64"/>
    </location>
    <ligand>
        <name>NADP(+)</name>
        <dbReference type="ChEBI" id="CHEBI:58349"/>
    </ligand>
</feature>
<feature type="binding site" evidence="1">
    <location>
        <position position="197"/>
    </location>
    <ligand>
        <name>substrate</name>
    </ligand>
</feature>
<comment type="function">
    <text evidence="4">Retinol dehydrogenase with a clear preference for NADP. Converts all-trans-retinol to all-trans-retinal.</text>
</comment>
<comment type="catalytic activity">
    <reaction>
        <text>all-trans-retinol + NADP(+) = all-trans-retinal + NADPH + H(+)</text>
        <dbReference type="Rhea" id="RHEA:25033"/>
        <dbReference type="ChEBI" id="CHEBI:15378"/>
        <dbReference type="ChEBI" id="CHEBI:17336"/>
        <dbReference type="ChEBI" id="CHEBI:17898"/>
        <dbReference type="ChEBI" id="CHEBI:57783"/>
        <dbReference type="ChEBI" id="CHEBI:58349"/>
        <dbReference type="EC" id="1.1.1.300"/>
    </reaction>
</comment>
<comment type="pathway">
    <text>Cofactor metabolism; retinol metabolism.</text>
</comment>
<comment type="subcellular location">
    <subcellularLocation>
        <location evidence="5">Microsome membrane</location>
        <topology evidence="5">Single-pass membrane protein</topology>
    </subcellularLocation>
    <subcellularLocation>
        <location evidence="5">Endoplasmic reticulum membrane</location>
        <topology evidence="5">Single-pass membrane protein</topology>
    </subcellularLocation>
</comment>
<comment type="tissue specificity">
    <text evidence="4">Detected in retina, entire eyecups and in liver (at protein level).</text>
</comment>
<comment type="similarity">
    <text evidence="5">Belongs to the short-chain dehydrogenases/reductases (SDR) family.</text>
</comment>
<evidence type="ECO:0000250" key="1"/>
<evidence type="ECO:0000255" key="2"/>
<evidence type="ECO:0000255" key="3">
    <source>
        <dbReference type="PROSITE-ProRule" id="PRU10001"/>
    </source>
</evidence>
<evidence type="ECO:0000269" key="4">
    <source>
    </source>
</evidence>
<evidence type="ECO:0000305" key="5"/>
<organism>
    <name type="scientific">Rattus norvegicus</name>
    <name type="common">Rat</name>
    <dbReference type="NCBI Taxonomy" id="10116"/>
    <lineage>
        <taxon>Eukaryota</taxon>
        <taxon>Metazoa</taxon>
        <taxon>Chordata</taxon>
        <taxon>Craniata</taxon>
        <taxon>Vertebrata</taxon>
        <taxon>Euteleostomi</taxon>
        <taxon>Mammalia</taxon>
        <taxon>Eutheria</taxon>
        <taxon>Euarchontoglires</taxon>
        <taxon>Glires</taxon>
        <taxon>Rodentia</taxon>
        <taxon>Myomorpha</taxon>
        <taxon>Muroidea</taxon>
        <taxon>Muridae</taxon>
        <taxon>Murinae</taxon>
        <taxon>Rattus</taxon>
    </lineage>
</organism>
<keyword id="KW-0256">Endoplasmic reticulum</keyword>
<keyword id="KW-0443">Lipid metabolism</keyword>
<keyword id="KW-0472">Membrane</keyword>
<keyword id="KW-0492">Microsome</keyword>
<keyword id="KW-0521">NADP</keyword>
<keyword id="KW-0560">Oxidoreductase</keyword>
<keyword id="KW-1185">Reference proteome</keyword>
<keyword id="KW-0735">Signal-anchor</keyword>
<keyword id="KW-0812">Transmembrane</keyword>
<keyword id="KW-1133">Transmembrane helix</keyword>
<sequence>MNIVVEFFLVTFKVLWAFVLAAARWLVRPKEKSVAGQVCLITGAGSGLGRLFALEFARRRALLVLWDINTQSNEETAGMVRHIYRDLEAADAAALQAGNGEEEILPPCNLQVFTYTCDVGKRENVYLTAERVRKEVGEVSVLVNNAGVVSGHHLLECPDELIERTMMVNCHAHFWTTKAFLPTMLEINHGHIVTVASSLGLFSTAGVEDYCASKFGVVGFHESLSHELKAAEKDGIKTTLVCPYLVDTGMFRGCRIRKEIEPFLPPLKPDYCVKQAMKAILTDQPMICTPRLMYIVTFMKSILPFEAVVCMYRFLGADKCMYPFIAQRKQATNNNEAKNGI</sequence>
<proteinExistence type="evidence at protein level"/>
<dbReference type="EC" id="1.1.1.300"/>
<dbReference type="EMBL" id="AY178865">
    <property type="protein sequence ID" value="AAO31688.1"/>
    <property type="molecule type" value="mRNA"/>
</dbReference>
<dbReference type="RefSeq" id="NP_852143.1">
    <property type="nucleotide sequence ID" value="NM_181478.2"/>
</dbReference>
<dbReference type="SMR" id="Q80ZF7"/>
<dbReference type="FunCoup" id="Q80ZF7">
    <property type="interactions" value="244"/>
</dbReference>
<dbReference type="STRING" id="10116.ENSRNOP00000009096"/>
<dbReference type="PhosphoSitePlus" id="Q80ZF7"/>
<dbReference type="PaxDb" id="10116-ENSRNOP00000009096"/>
<dbReference type="Ensembl" id="ENSRNOT00000009096.5">
    <property type="protein sequence ID" value="ENSRNOP00000009096.2"/>
    <property type="gene ID" value="ENSRNOG00000006681.5"/>
</dbReference>
<dbReference type="GeneID" id="353252"/>
<dbReference type="KEGG" id="rno:353252"/>
<dbReference type="UCSC" id="RGD:727793">
    <property type="organism name" value="rat"/>
</dbReference>
<dbReference type="AGR" id="RGD:727793"/>
<dbReference type="CTD" id="157506"/>
<dbReference type="RGD" id="727793">
    <property type="gene designation" value="Rdh10"/>
</dbReference>
<dbReference type="eggNOG" id="KOG1201">
    <property type="taxonomic scope" value="Eukaryota"/>
</dbReference>
<dbReference type="GeneTree" id="ENSGT00940000157063"/>
<dbReference type="HOGENOM" id="CLU_010194_2_5_1"/>
<dbReference type="InParanoid" id="Q80ZF7"/>
<dbReference type="OMA" id="KQAMNNN"/>
<dbReference type="OrthoDB" id="5840532at2759"/>
<dbReference type="PhylomeDB" id="Q80ZF7"/>
<dbReference type="TreeFam" id="TF312837"/>
<dbReference type="Reactome" id="R-RNO-2453902">
    <property type="pathway name" value="The canonical retinoid cycle in rods (twilight vision)"/>
</dbReference>
<dbReference type="Reactome" id="R-RNO-5365859">
    <property type="pathway name" value="RA biosynthesis pathway"/>
</dbReference>
<dbReference type="UniPathway" id="UPA00912"/>
<dbReference type="PRO" id="PR:Q80ZF7"/>
<dbReference type="Proteomes" id="UP000002494">
    <property type="component" value="Chromosome 5"/>
</dbReference>
<dbReference type="Bgee" id="ENSRNOG00000006681">
    <property type="expression patterns" value="Expressed in liver and 19 other cell types or tissues"/>
</dbReference>
<dbReference type="GO" id="GO:0005737">
    <property type="term" value="C:cytoplasm"/>
    <property type="evidence" value="ECO:0000266"/>
    <property type="project" value="RGD"/>
</dbReference>
<dbReference type="GO" id="GO:0005789">
    <property type="term" value="C:endoplasmic reticulum membrane"/>
    <property type="evidence" value="ECO:0007669"/>
    <property type="project" value="UniProtKB-SubCell"/>
</dbReference>
<dbReference type="GO" id="GO:0005811">
    <property type="term" value="C:lipid droplet"/>
    <property type="evidence" value="ECO:0000318"/>
    <property type="project" value="GO_Central"/>
</dbReference>
<dbReference type="GO" id="GO:0016020">
    <property type="term" value="C:membrane"/>
    <property type="evidence" value="ECO:0000266"/>
    <property type="project" value="RGD"/>
</dbReference>
<dbReference type="GO" id="GO:0004745">
    <property type="term" value="F:all-trans-retinol dehydrogenase (NAD+) activity"/>
    <property type="evidence" value="ECO:0000266"/>
    <property type="project" value="RGD"/>
</dbReference>
<dbReference type="GO" id="GO:0052650">
    <property type="term" value="F:all-trans-retinol dehydrogenase (NADP+) activity"/>
    <property type="evidence" value="ECO:0007669"/>
    <property type="project" value="UniProtKB-EC"/>
</dbReference>
<dbReference type="GO" id="GO:0016616">
    <property type="term" value="F:oxidoreductase activity, acting on the CH-OH group of donors, NAD or NADP as acceptor"/>
    <property type="evidence" value="ECO:0000318"/>
    <property type="project" value="GO_Central"/>
</dbReference>
<dbReference type="GO" id="GO:0009887">
    <property type="term" value="P:animal organ morphogenesis"/>
    <property type="evidence" value="ECO:0000266"/>
    <property type="project" value="RGD"/>
</dbReference>
<dbReference type="GO" id="GO:0060449">
    <property type="term" value="P:bud elongation involved in lung branching"/>
    <property type="evidence" value="ECO:0000266"/>
    <property type="project" value="RGD"/>
</dbReference>
<dbReference type="GO" id="GO:0043583">
    <property type="term" value="P:ear development"/>
    <property type="evidence" value="ECO:0000266"/>
    <property type="project" value="RGD"/>
</dbReference>
<dbReference type="GO" id="GO:0031076">
    <property type="term" value="P:embryonic camera-type eye development"/>
    <property type="evidence" value="ECO:0000266"/>
    <property type="project" value="RGD"/>
</dbReference>
<dbReference type="GO" id="GO:0035115">
    <property type="term" value="P:embryonic forelimb morphogenesis"/>
    <property type="evidence" value="ECO:0000266"/>
    <property type="project" value="RGD"/>
</dbReference>
<dbReference type="GO" id="GO:0048568">
    <property type="term" value="P:embryonic organ development"/>
    <property type="evidence" value="ECO:0000266"/>
    <property type="project" value="RGD"/>
</dbReference>
<dbReference type="GO" id="GO:0048703">
    <property type="term" value="P:embryonic viscerocranium morphogenesis"/>
    <property type="evidence" value="ECO:0000266"/>
    <property type="project" value="RGD"/>
</dbReference>
<dbReference type="GO" id="GO:0008406">
    <property type="term" value="P:gonad development"/>
    <property type="evidence" value="ECO:0000266"/>
    <property type="project" value="RGD"/>
</dbReference>
<dbReference type="GO" id="GO:0001701">
    <property type="term" value="P:in utero embryonic development"/>
    <property type="evidence" value="ECO:0000266"/>
    <property type="project" value="RGD"/>
</dbReference>
<dbReference type="GO" id="GO:0001656">
    <property type="term" value="P:metanephros development"/>
    <property type="evidence" value="ECO:0000266"/>
    <property type="project" value="RGD"/>
</dbReference>
<dbReference type="GO" id="GO:0014032">
    <property type="term" value="P:neural crest cell development"/>
    <property type="evidence" value="ECO:0000266"/>
    <property type="project" value="RGD"/>
</dbReference>
<dbReference type="GO" id="GO:0043584">
    <property type="term" value="P:nose development"/>
    <property type="evidence" value="ECO:0000266"/>
    <property type="project" value="RGD"/>
</dbReference>
<dbReference type="GO" id="GO:1900054">
    <property type="term" value="P:positive regulation of retinoic acid biosynthetic process"/>
    <property type="evidence" value="ECO:0000315"/>
    <property type="project" value="RGD"/>
</dbReference>
<dbReference type="GO" id="GO:0060431">
    <property type="term" value="P:primary lung bud formation"/>
    <property type="evidence" value="ECO:0000266"/>
    <property type="project" value="RGD"/>
</dbReference>
<dbReference type="GO" id="GO:0042574">
    <property type="term" value="P:retinal metabolic process"/>
    <property type="evidence" value="ECO:0000266"/>
    <property type="project" value="RGD"/>
</dbReference>
<dbReference type="GO" id="GO:0002138">
    <property type="term" value="P:retinoic acid biosynthetic process"/>
    <property type="evidence" value="ECO:0000266"/>
    <property type="project" value="RGD"/>
</dbReference>
<dbReference type="GO" id="GO:0042572">
    <property type="term" value="P:retinol metabolic process"/>
    <property type="evidence" value="ECO:0000266"/>
    <property type="project" value="RGD"/>
</dbReference>
<dbReference type="GO" id="GO:0007601">
    <property type="term" value="P:visual perception"/>
    <property type="evidence" value="ECO:0000266"/>
    <property type="project" value="RGD"/>
</dbReference>
<dbReference type="CDD" id="cd05339">
    <property type="entry name" value="17beta-HSDXI-like_SDR_c"/>
    <property type="match status" value="1"/>
</dbReference>
<dbReference type="FunFam" id="3.40.50.720:FF:000177">
    <property type="entry name" value="Retinol dehydrogenase 10"/>
    <property type="match status" value="1"/>
</dbReference>
<dbReference type="Gene3D" id="3.40.50.720">
    <property type="entry name" value="NAD(P)-binding Rossmann-like Domain"/>
    <property type="match status" value="1"/>
</dbReference>
<dbReference type="InterPro" id="IPR036291">
    <property type="entry name" value="NAD(P)-bd_dom_sf"/>
</dbReference>
<dbReference type="InterPro" id="IPR020904">
    <property type="entry name" value="Sc_DH/Rdtase_CS"/>
</dbReference>
<dbReference type="InterPro" id="IPR002347">
    <property type="entry name" value="SDR_fam"/>
</dbReference>
<dbReference type="PANTHER" id="PTHR24322">
    <property type="entry name" value="PKSB"/>
    <property type="match status" value="1"/>
</dbReference>
<dbReference type="PANTHER" id="PTHR24322:SF736">
    <property type="entry name" value="RETINOL DEHYDROGENASE 10"/>
    <property type="match status" value="1"/>
</dbReference>
<dbReference type="Pfam" id="PF00106">
    <property type="entry name" value="adh_short"/>
    <property type="match status" value="1"/>
</dbReference>
<dbReference type="PRINTS" id="PR00081">
    <property type="entry name" value="GDHRDH"/>
</dbReference>
<dbReference type="PRINTS" id="PR00080">
    <property type="entry name" value="SDRFAMILY"/>
</dbReference>
<dbReference type="SUPFAM" id="SSF51735">
    <property type="entry name" value="NAD(P)-binding Rossmann-fold domains"/>
    <property type="match status" value="1"/>
</dbReference>
<dbReference type="PROSITE" id="PS00061">
    <property type="entry name" value="ADH_SHORT"/>
    <property type="match status" value="1"/>
</dbReference>
<reference key="1">
    <citation type="journal article" date="2004" name="Invest. Ophthalmol. Vis. Sci.">
        <title>Identification of RDH10, an all-trans retinol dehydrogenase, in retinal Mueller cells.</title>
        <authorList>
            <person name="Wu B.X."/>
            <person name="Moiseyev G."/>
            <person name="Chen Y."/>
            <person name="Rohrer B."/>
            <person name="Crouch R.K."/>
            <person name="Ma J.-X."/>
        </authorList>
    </citation>
    <scope>NUCLEOTIDE SEQUENCE [MRNA]</scope>
    <scope>FUNCTION</scope>
    <scope>TISSUE SPECIFICITY</scope>
    <source>
        <tissue>Retina</tissue>
    </source>
</reference>
<gene>
    <name type="primary">Rdh10</name>
</gene>
<accession>Q80ZF7</accession>